<name>ENLYS_BPP21</name>
<organism>
    <name type="scientific">Enterobacteria phage P21</name>
    <name type="common">Bacteriophage 21</name>
    <name type="synonym">Bacteriophage P21</name>
    <dbReference type="NCBI Taxonomy" id="10711"/>
    <lineage>
        <taxon>Viruses</taxon>
        <taxon>Duplodnaviria</taxon>
        <taxon>Heunggongvirae</taxon>
        <taxon>Uroviricota</taxon>
        <taxon>Caudoviricetes</taxon>
        <taxon>Lambdavirus</taxon>
        <taxon>Lambdavirus lambda</taxon>
    </lineage>
</organism>
<feature type="chain" id="PRO_0000218101" description="SAR-endolysin">
    <location>
        <begin position="1"/>
        <end position="165"/>
    </location>
</feature>
<feature type="transmembrane region" description="Helical; Signal-anchor for type II membrane protein" evidence="1">
    <location>
        <begin position="8"/>
        <end position="28"/>
    </location>
</feature>
<feature type="active site" description="Proton donor/acceptor" evidence="2 4">
    <location>
        <position position="35"/>
    </location>
</feature>
<feature type="active site" description="Proton donor/acceptor" evidence="2 4">
    <location>
        <position position="44"/>
    </location>
</feature>
<feature type="mutagenesis site" description="The SAR-endolysin remains tethered in the membrane and cannot be released; complete loss of lysis." evidence="3">
    <original>GG</original>
    <variation>LL</variation>
    <location>
        <begin position="14"/>
        <end position="15"/>
    </location>
</feature>
<feature type="helix" evidence="7">
    <location>
        <begin position="3"/>
        <end position="12"/>
    </location>
</feature>
<feature type="helix" evidence="7">
    <location>
        <begin position="13"/>
        <end position="15"/>
    </location>
</feature>
<feature type="helix" evidence="7">
    <location>
        <begin position="16"/>
        <end position="26"/>
    </location>
</feature>
<feature type="strand" evidence="7">
    <location>
        <begin position="30"/>
        <end position="35"/>
    </location>
</feature>
<feature type="strand" evidence="8">
    <location>
        <begin position="38"/>
        <end position="43"/>
    </location>
</feature>
<feature type="strand" evidence="8">
    <location>
        <begin position="49"/>
        <end position="52"/>
    </location>
</feature>
<feature type="helix" evidence="8">
    <location>
        <begin position="68"/>
        <end position="86"/>
    </location>
</feature>
<feature type="helix" evidence="8">
    <location>
        <begin position="87"/>
        <end position="89"/>
    </location>
</feature>
<feature type="helix" evidence="8">
    <location>
        <begin position="96"/>
        <end position="109"/>
    </location>
</feature>
<feature type="helix" evidence="8">
    <location>
        <begin position="114"/>
        <end position="125"/>
    </location>
</feature>
<feature type="helix" evidence="8">
    <location>
        <begin position="128"/>
        <end position="136"/>
    </location>
</feature>
<feature type="turn" evidence="8">
    <location>
        <begin position="139"/>
        <end position="141"/>
    </location>
</feature>
<feature type="strand" evidence="8">
    <location>
        <begin position="148"/>
        <end position="150"/>
    </location>
</feature>
<feature type="helix" evidence="8">
    <location>
        <begin position="152"/>
        <end position="163"/>
    </location>
</feature>
<sequence>MPPSLRKAVAAAIGGGAIAIASVLITGPSGNDGLEGVSYIPYKDIVGVWTVCHGHTGKDIMLGKTYTKAECKALLNKDLATVARQINPYIKVDIPETMRGALYSLLYNVGAGNFRTSTLLRKINQGDIKGACDQLRRWTYAGGKQWKGLMTRREIEREICLWGQQ</sequence>
<protein>
    <recommendedName>
        <fullName evidence="2">SAR-endolysin</fullName>
        <ecNumber evidence="2">3.2.1.17</ecNumber>
    </recommendedName>
    <alternativeName>
        <fullName evidence="2">Endolysin</fullName>
    </alternativeName>
    <alternativeName>
        <fullName evidence="2">Lysis protein</fullName>
    </alternativeName>
    <alternativeName>
        <fullName evidence="2">Lysozyme</fullName>
    </alternativeName>
    <alternativeName>
        <fullName evidence="2">Muramidase</fullName>
    </alternativeName>
</protein>
<comment type="function">
    <text evidence="2">Signal-arrest-release (SAR) endolysin with lysozyme activity that degrades host peptidoglycans and participates with the pinholin and spanin proteins in the sequential events which lead to programmed host cell lysis releasing the mature viral particles. Once the pinholin has permeabilized the host cell membrane, the SAR-endolysin is released into the periplasm where it breaks down the peptidoglycan layer.</text>
</comment>
<comment type="catalytic activity">
    <reaction evidence="2">
        <text>Hydrolysis of (1-&gt;4)-beta-linkages between N-acetylmuramic acid and N-acetyl-D-glucosamine residues in a peptidoglycan and between N-acetyl-D-glucosamine residues in chitodextrins.</text>
        <dbReference type="EC" id="3.2.1.17"/>
    </reaction>
</comment>
<comment type="subcellular location">
    <subcellularLocation>
        <location evidence="2">Host cell inner membrane</location>
        <topology evidence="2">Single-pass type II membrane protein</topology>
        <orientation evidence="2">Periplasmic side</orientation>
    </subcellularLocation>
    <text evidence="2">Secreted as a signal-anchored, membrane-tethered, inactive endolysin which is subsequently refolded, activated and released by membrane depolarization driven by the pinholin.</text>
</comment>
<comment type="domain">
    <text evidence="2">The signal-anchor, which may also be an uncleaved signal sequence tethers the SAR-endolysin to the membrane until the latter is depolarized by the holin, resulting in the escape of SAR-endolysin from the membrane.</text>
</comment>
<comment type="similarity">
    <text evidence="2">Belongs to the glycosyl hydrolase 24 family.</text>
</comment>
<gene>
    <name type="primary">R</name>
</gene>
<organismHost>
    <name type="scientific">Escherichia coli</name>
    <dbReference type="NCBI Taxonomy" id="562"/>
</organismHost>
<accession>P27359</accession>
<proteinExistence type="evidence at protein level"/>
<dbReference type="EC" id="3.2.1.17" evidence="2"/>
<dbReference type="EMBL" id="M65239">
    <property type="protein sequence ID" value="AAA32350.1"/>
    <property type="molecule type" value="Genomic_DNA"/>
</dbReference>
<dbReference type="PDB" id="3HDE">
    <property type="method" value="X-ray"/>
    <property type="resolution" value="1.95 A"/>
    <property type="chains" value="A/B/C/D=1-165"/>
</dbReference>
<dbReference type="PDB" id="3HDF">
    <property type="method" value="X-ray"/>
    <property type="resolution" value="1.70 A"/>
    <property type="chains" value="A/B=27-165"/>
</dbReference>
<dbReference type="PDBsum" id="3HDE"/>
<dbReference type="PDBsum" id="3HDF"/>
<dbReference type="SMR" id="P27359"/>
<dbReference type="CAZy" id="GH24">
    <property type="family name" value="Glycoside Hydrolase Family 24"/>
</dbReference>
<dbReference type="EvolutionaryTrace" id="P27359"/>
<dbReference type="GO" id="GO:0020002">
    <property type="term" value="C:host cell plasma membrane"/>
    <property type="evidence" value="ECO:0007669"/>
    <property type="project" value="UniProtKB-SubCell"/>
</dbReference>
<dbReference type="GO" id="GO:0016020">
    <property type="term" value="C:membrane"/>
    <property type="evidence" value="ECO:0007669"/>
    <property type="project" value="UniProtKB-KW"/>
</dbReference>
<dbReference type="GO" id="GO:0003796">
    <property type="term" value="F:lysozyme activity"/>
    <property type="evidence" value="ECO:0007669"/>
    <property type="project" value="UniProtKB-EC"/>
</dbReference>
<dbReference type="GO" id="GO:0016998">
    <property type="term" value="P:cell wall macromolecule catabolic process"/>
    <property type="evidence" value="ECO:0007669"/>
    <property type="project" value="InterPro"/>
</dbReference>
<dbReference type="GO" id="GO:0042742">
    <property type="term" value="P:defense response to bacterium"/>
    <property type="evidence" value="ECO:0007669"/>
    <property type="project" value="UniProtKB-KW"/>
</dbReference>
<dbReference type="GO" id="GO:0031640">
    <property type="term" value="P:killing of cells of another organism"/>
    <property type="evidence" value="ECO:0007669"/>
    <property type="project" value="UniProtKB-KW"/>
</dbReference>
<dbReference type="GO" id="GO:0009253">
    <property type="term" value="P:peptidoglycan catabolic process"/>
    <property type="evidence" value="ECO:0007669"/>
    <property type="project" value="InterPro"/>
</dbReference>
<dbReference type="CDD" id="cd16900">
    <property type="entry name" value="endolysin_R21-like"/>
    <property type="match status" value="1"/>
</dbReference>
<dbReference type="FunFam" id="1.10.530.40:FF:000001">
    <property type="entry name" value="Lysozyme"/>
    <property type="match status" value="1"/>
</dbReference>
<dbReference type="Gene3D" id="1.10.530.40">
    <property type="match status" value="1"/>
</dbReference>
<dbReference type="HAMAP" id="MF_04110">
    <property type="entry name" value="ENDOLYSIN_T4"/>
    <property type="match status" value="1"/>
</dbReference>
<dbReference type="HAMAP" id="MF_04136">
    <property type="entry name" value="SAR_ENDOLYSIN"/>
    <property type="match status" value="1"/>
</dbReference>
<dbReference type="InterPro" id="IPR051018">
    <property type="entry name" value="Bacteriophage_GH24"/>
</dbReference>
<dbReference type="InterPro" id="IPR034690">
    <property type="entry name" value="Endolysin_T4_type"/>
</dbReference>
<dbReference type="InterPro" id="IPR002196">
    <property type="entry name" value="Glyco_hydro_24"/>
</dbReference>
<dbReference type="InterPro" id="IPR023346">
    <property type="entry name" value="Lysozyme-like_dom_sf"/>
</dbReference>
<dbReference type="InterPro" id="IPR023347">
    <property type="entry name" value="Lysozyme_dom_sf"/>
</dbReference>
<dbReference type="InterPro" id="IPR043688">
    <property type="entry name" value="SAR_endolysin-like"/>
</dbReference>
<dbReference type="PANTHER" id="PTHR38107">
    <property type="match status" value="1"/>
</dbReference>
<dbReference type="PANTHER" id="PTHR38107:SF3">
    <property type="entry name" value="LYSOZYME RRRD-RELATED"/>
    <property type="match status" value="1"/>
</dbReference>
<dbReference type="Pfam" id="PF00959">
    <property type="entry name" value="Phage_lysozyme"/>
    <property type="match status" value="1"/>
</dbReference>
<dbReference type="SUPFAM" id="SSF53955">
    <property type="entry name" value="Lysozyme-like"/>
    <property type="match status" value="1"/>
</dbReference>
<reference key="1">
    <citation type="journal article" date="1991" name="J. Bacteriol.">
        <title>Dual start motif in two lambdoid S genes unrelated to lambda S.</title>
        <authorList>
            <person name="Bonovich M.T."/>
            <person name="Young R."/>
        </authorList>
    </citation>
    <scope>NUCLEOTIDE SEQUENCE [GENOMIC DNA]</scope>
</reference>
<reference evidence="5 6" key="2">
    <citation type="journal article" date="2009" name="Nat. Struct. Mol. Biol.">
        <title>Regulation of a muralytic enzyme by dynamic membrane topology.</title>
        <authorList>
            <person name="Sun Q."/>
            <person name="Kuty G.F."/>
            <person name="Arockiasamy A."/>
            <person name="Xu M."/>
            <person name="Young R."/>
            <person name="Sacchettini J.C."/>
        </authorList>
    </citation>
    <scope>X-RAY CRYSTALLOGRAPHY (1.70 ANGSTROMS) OF 27-165</scope>
    <scope>MUTAGENESIS OF 14-GLY-GLY-15</scope>
</reference>
<evidence type="ECO:0000255" key="1"/>
<evidence type="ECO:0000255" key="2">
    <source>
        <dbReference type="HAMAP-Rule" id="MF_04136"/>
    </source>
</evidence>
<evidence type="ECO:0000269" key="3">
    <source>
    </source>
</evidence>
<evidence type="ECO:0000305" key="4">
    <source>
    </source>
</evidence>
<evidence type="ECO:0007744" key="5">
    <source>
        <dbReference type="PDB" id="3HDE"/>
    </source>
</evidence>
<evidence type="ECO:0007744" key="6">
    <source>
        <dbReference type="PDB" id="3HDF"/>
    </source>
</evidence>
<evidence type="ECO:0007829" key="7">
    <source>
        <dbReference type="PDB" id="3HDE"/>
    </source>
</evidence>
<evidence type="ECO:0007829" key="8">
    <source>
        <dbReference type="PDB" id="3HDF"/>
    </source>
</evidence>
<keyword id="KW-0002">3D-structure</keyword>
<keyword id="KW-0929">Antimicrobial</keyword>
<keyword id="KW-0081">Bacteriolytic enzyme</keyword>
<keyword id="KW-0204">Cytolysis</keyword>
<keyword id="KW-0326">Glycosidase</keyword>
<keyword id="KW-1030">Host cell inner membrane</keyword>
<keyword id="KW-0578">Host cell lysis by virus</keyword>
<keyword id="KW-1032">Host cell membrane</keyword>
<keyword id="KW-1043">Host membrane</keyword>
<keyword id="KW-0378">Hydrolase</keyword>
<keyword id="KW-0472">Membrane</keyword>
<keyword id="KW-0735">Signal-anchor</keyword>
<keyword id="KW-0812">Transmembrane</keyword>
<keyword id="KW-1133">Transmembrane helix</keyword>
<keyword id="KW-1188">Viral release from host cell</keyword>